<gene>
    <name evidence="1" type="primary">dsrB</name>
    <name type="ordered locus">SPA0887</name>
</gene>
<evidence type="ECO:0000255" key="1">
    <source>
        <dbReference type="HAMAP-Rule" id="MF_01549"/>
    </source>
</evidence>
<evidence type="ECO:0000305" key="2"/>
<dbReference type="EMBL" id="CP000026">
    <property type="protein sequence ID" value="AAV76867.1"/>
    <property type="status" value="ALT_INIT"/>
    <property type="molecule type" value="Genomic_DNA"/>
</dbReference>
<dbReference type="RefSeq" id="WP_000867218.1">
    <property type="nucleotide sequence ID" value="NC_006511.1"/>
</dbReference>
<dbReference type="SMR" id="Q5PLI6"/>
<dbReference type="KEGG" id="spt:SPA0887"/>
<dbReference type="HOGENOM" id="CLU_189289_0_0_6"/>
<dbReference type="Proteomes" id="UP000008185">
    <property type="component" value="Chromosome"/>
</dbReference>
<dbReference type="HAMAP" id="MF_01549">
    <property type="entry name" value="DsrB"/>
    <property type="match status" value="1"/>
</dbReference>
<dbReference type="InterPro" id="IPR019717">
    <property type="entry name" value="Dextransucrase_DSRB"/>
</dbReference>
<dbReference type="NCBIfam" id="NF007981">
    <property type="entry name" value="PRK10708.1"/>
    <property type="match status" value="1"/>
</dbReference>
<dbReference type="Pfam" id="PF10781">
    <property type="entry name" value="DSRB"/>
    <property type="match status" value="1"/>
</dbReference>
<organism>
    <name type="scientific">Salmonella paratyphi A (strain ATCC 9150 / SARB42)</name>
    <dbReference type="NCBI Taxonomy" id="295319"/>
    <lineage>
        <taxon>Bacteria</taxon>
        <taxon>Pseudomonadati</taxon>
        <taxon>Pseudomonadota</taxon>
        <taxon>Gammaproteobacteria</taxon>
        <taxon>Enterobacterales</taxon>
        <taxon>Enterobacteriaceae</taxon>
        <taxon>Salmonella</taxon>
    </lineage>
</organism>
<sequence>MKVNDRVTVKTDGGPRRPGVVLAVEEFSEGTMYLVSLEDYPLGIWFFNESGHQDGIFVEKAEQD</sequence>
<feature type="chain" id="PRO_0000201911" description="Protein DsrB">
    <location>
        <begin position="1"/>
        <end position="64"/>
    </location>
</feature>
<name>DSRB_SALPA</name>
<comment type="similarity">
    <text evidence="1">Belongs to the DsrB family.</text>
</comment>
<comment type="sequence caution" evidence="2">
    <conflict type="erroneous initiation">
        <sequence resource="EMBL-CDS" id="AAV76867"/>
    </conflict>
</comment>
<protein>
    <recommendedName>
        <fullName evidence="1">Protein DsrB</fullName>
    </recommendedName>
</protein>
<accession>Q5PLI6</accession>
<proteinExistence type="inferred from homology"/>
<reference key="1">
    <citation type="journal article" date="2004" name="Nat. Genet.">
        <title>Comparison of genome degradation in Paratyphi A and Typhi, human-restricted serovars of Salmonella enterica that cause typhoid.</title>
        <authorList>
            <person name="McClelland M."/>
            <person name="Sanderson K.E."/>
            <person name="Clifton S.W."/>
            <person name="Latreille P."/>
            <person name="Porwollik S."/>
            <person name="Sabo A."/>
            <person name="Meyer R."/>
            <person name="Bieri T."/>
            <person name="Ozersky P."/>
            <person name="McLellan M."/>
            <person name="Harkins C.R."/>
            <person name="Wang C."/>
            <person name="Nguyen C."/>
            <person name="Berghoff A."/>
            <person name="Elliott G."/>
            <person name="Kohlberg S."/>
            <person name="Strong C."/>
            <person name="Du F."/>
            <person name="Carter J."/>
            <person name="Kremizki C."/>
            <person name="Layman D."/>
            <person name="Leonard S."/>
            <person name="Sun H."/>
            <person name="Fulton L."/>
            <person name="Nash W."/>
            <person name="Miner T."/>
            <person name="Minx P."/>
            <person name="Delehaunty K."/>
            <person name="Fronick C."/>
            <person name="Magrini V."/>
            <person name="Nhan M."/>
            <person name="Warren W."/>
            <person name="Florea L."/>
            <person name="Spieth J."/>
            <person name="Wilson R.K."/>
        </authorList>
    </citation>
    <scope>NUCLEOTIDE SEQUENCE [LARGE SCALE GENOMIC DNA]</scope>
    <source>
        <strain>ATCC 9150 / SARB42</strain>
    </source>
</reference>